<evidence type="ECO:0000255" key="1">
    <source>
        <dbReference type="HAMAP-Rule" id="MF_00176"/>
    </source>
</evidence>
<organism>
    <name type="scientific">Nitrosopumilus maritimus (strain SCM1)</name>
    <dbReference type="NCBI Taxonomy" id="436308"/>
    <lineage>
        <taxon>Archaea</taxon>
        <taxon>Nitrososphaerota</taxon>
        <taxon>Nitrososphaeria</taxon>
        <taxon>Nitrosopumilales</taxon>
        <taxon>Nitrosopumilaceae</taxon>
        <taxon>Nitrosopumilus</taxon>
    </lineage>
</organism>
<comment type="function">
    <text evidence="1">Catalyzes the attachment of serine to tRNA(Ser). Is also able to aminoacylate tRNA(Sec) with serine, to form the misacylated tRNA L-seryl-tRNA(Sec), which will be further converted into selenocysteinyl-tRNA(Sec).</text>
</comment>
<comment type="catalytic activity">
    <reaction evidence="1">
        <text>tRNA(Ser) + L-serine + ATP = L-seryl-tRNA(Ser) + AMP + diphosphate + H(+)</text>
        <dbReference type="Rhea" id="RHEA:12292"/>
        <dbReference type="Rhea" id="RHEA-COMP:9669"/>
        <dbReference type="Rhea" id="RHEA-COMP:9703"/>
        <dbReference type="ChEBI" id="CHEBI:15378"/>
        <dbReference type="ChEBI" id="CHEBI:30616"/>
        <dbReference type="ChEBI" id="CHEBI:33019"/>
        <dbReference type="ChEBI" id="CHEBI:33384"/>
        <dbReference type="ChEBI" id="CHEBI:78442"/>
        <dbReference type="ChEBI" id="CHEBI:78533"/>
        <dbReference type="ChEBI" id="CHEBI:456215"/>
        <dbReference type="EC" id="6.1.1.11"/>
    </reaction>
</comment>
<comment type="catalytic activity">
    <reaction evidence="1">
        <text>tRNA(Sec) + L-serine + ATP = L-seryl-tRNA(Sec) + AMP + diphosphate + H(+)</text>
        <dbReference type="Rhea" id="RHEA:42580"/>
        <dbReference type="Rhea" id="RHEA-COMP:9742"/>
        <dbReference type="Rhea" id="RHEA-COMP:10128"/>
        <dbReference type="ChEBI" id="CHEBI:15378"/>
        <dbReference type="ChEBI" id="CHEBI:30616"/>
        <dbReference type="ChEBI" id="CHEBI:33019"/>
        <dbReference type="ChEBI" id="CHEBI:33384"/>
        <dbReference type="ChEBI" id="CHEBI:78442"/>
        <dbReference type="ChEBI" id="CHEBI:78533"/>
        <dbReference type="ChEBI" id="CHEBI:456215"/>
        <dbReference type="EC" id="6.1.1.11"/>
    </reaction>
</comment>
<comment type="pathway">
    <text evidence="1">Aminoacyl-tRNA biosynthesis; selenocysteinyl-tRNA(Sec) biosynthesis; L-seryl-tRNA(Sec) from L-serine and tRNA(Sec): step 1/1.</text>
</comment>
<comment type="subunit">
    <text evidence="1">Homodimer. The tRNA molecule binds across the dimer.</text>
</comment>
<comment type="subcellular location">
    <subcellularLocation>
        <location evidence="1">Cytoplasm</location>
    </subcellularLocation>
</comment>
<comment type="domain">
    <text evidence="1">Consists of two distinct domains, a catalytic core and a N-terminal extension that is involved in tRNA binding.</text>
</comment>
<comment type="similarity">
    <text evidence="1">Belongs to the class-II aminoacyl-tRNA synthetase family. Type-1 seryl-tRNA synthetase subfamily.</text>
</comment>
<dbReference type="EC" id="6.1.1.11" evidence="1"/>
<dbReference type="EMBL" id="CP000866">
    <property type="protein sequence ID" value="ABX13407.1"/>
    <property type="molecule type" value="Genomic_DNA"/>
</dbReference>
<dbReference type="RefSeq" id="WP_012215894.1">
    <property type="nucleotide sequence ID" value="NC_010085.1"/>
</dbReference>
<dbReference type="SMR" id="A9A4V3"/>
<dbReference type="FunCoup" id="A9A4V3">
    <property type="interactions" value="224"/>
</dbReference>
<dbReference type="STRING" id="436308.Nmar_1511"/>
<dbReference type="EnsemblBacteria" id="ABX13407">
    <property type="protein sequence ID" value="ABX13407"/>
    <property type="gene ID" value="Nmar_1511"/>
</dbReference>
<dbReference type="GeneID" id="5773574"/>
<dbReference type="KEGG" id="nmr:Nmar_1511"/>
<dbReference type="eggNOG" id="arCOG00403">
    <property type="taxonomic scope" value="Archaea"/>
</dbReference>
<dbReference type="HOGENOM" id="CLU_023797_0_1_2"/>
<dbReference type="InParanoid" id="A9A4V3"/>
<dbReference type="OrthoDB" id="35932at2157"/>
<dbReference type="PhylomeDB" id="A9A4V3"/>
<dbReference type="UniPathway" id="UPA00906">
    <property type="reaction ID" value="UER00895"/>
</dbReference>
<dbReference type="Proteomes" id="UP000000792">
    <property type="component" value="Chromosome"/>
</dbReference>
<dbReference type="GO" id="GO:0005829">
    <property type="term" value="C:cytosol"/>
    <property type="evidence" value="ECO:0000318"/>
    <property type="project" value="GO_Central"/>
</dbReference>
<dbReference type="GO" id="GO:0005524">
    <property type="term" value="F:ATP binding"/>
    <property type="evidence" value="ECO:0007669"/>
    <property type="project" value="UniProtKB-UniRule"/>
</dbReference>
<dbReference type="GO" id="GO:0004828">
    <property type="term" value="F:serine-tRNA ligase activity"/>
    <property type="evidence" value="ECO:0000318"/>
    <property type="project" value="GO_Central"/>
</dbReference>
<dbReference type="GO" id="GO:0000049">
    <property type="term" value="F:tRNA binding"/>
    <property type="evidence" value="ECO:0000318"/>
    <property type="project" value="GO_Central"/>
</dbReference>
<dbReference type="GO" id="GO:0016260">
    <property type="term" value="P:selenocysteine biosynthetic process"/>
    <property type="evidence" value="ECO:0007669"/>
    <property type="project" value="UniProtKB-UniRule"/>
</dbReference>
<dbReference type="GO" id="GO:0006434">
    <property type="term" value="P:seryl-tRNA aminoacylation"/>
    <property type="evidence" value="ECO:0000318"/>
    <property type="project" value="GO_Central"/>
</dbReference>
<dbReference type="CDD" id="cd00770">
    <property type="entry name" value="SerRS_core"/>
    <property type="match status" value="1"/>
</dbReference>
<dbReference type="FunFam" id="3.30.930.10:FF:000048">
    <property type="entry name" value="Serine--tRNA ligase"/>
    <property type="match status" value="1"/>
</dbReference>
<dbReference type="Gene3D" id="3.30.930.10">
    <property type="entry name" value="Bira Bifunctional Protein, Domain 2"/>
    <property type="match status" value="1"/>
</dbReference>
<dbReference type="Gene3D" id="1.10.287.40">
    <property type="entry name" value="Serine-tRNA synthetase, tRNA binding domain"/>
    <property type="match status" value="1"/>
</dbReference>
<dbReference type="HAMAP" id="MF_00176">
    <property type="entry name" value="Ser_tRNA_synth_type1"/>
    <property type="match status" value="1"/>
</dbReference>
<dbReference type="InterPro" id="IPR002314">
    <property type="entry name" value="aa-tRNA-synt_IIb"/>
</dbReference>
<dbReference type="InterPro" id="IPR006195">
    <property type="entry name" value="aa-tRNA-synth_II"/>
</dbReference>
<dbReference type="InterPro" id="IPR045864">
    <property type="entry name" value="aa-tRNA-synth_II/BPL/LPL"/>
</dbReference>
<dbReference type="InterPro" id="IPR002317">
    <property type="entry name" value="Ser-tRNA-ligase_type_1"/>
</dbReference>
<dbReference type="InterPro" id="IPR015866">
    <property type="entry name" value="Ser-tRNA-synth_1_N"/>
</dbReference>
<dbReference type="InterPro" id="IPR042103">
    <property type="entry name" value="SerRS_1_N_sf"/>
</dbReference>
<dbReference type="InterPro" id="IPR033729">
    <property type="entry name" value="SerRS_core"/>
</dbReference>
<dbReference type="InterPro" id="IPR010978">
    <property type="entry name" value="tRNA-bd_arm"/>
</dbReference>
<dbReference type="NCBIfam" id="TIGR00414">
    <property type="entry name" value="serS"/>
    <property type="match status" value="1"/>
</dbReference>
<dbReference type="PANTHER" id="PTHR11778">
    <property type="entry name" value="SERYL-TRNA SYNTHETASE"/>
    <property type="match status" value="1"/>
</dbReference>
<dbReference type="Pfam" id="PF02403">
    <property type="entry name" value="Seryl_tRNA_N"/>
    <property type="match status" value="1"/>
</dbReference>
<dbReference type="Pfam" id="PF00587">
    <property type="entry name" value="tRNA-synt_2b"/>
    <property type="match status" value="1"/>
</dbReference>
<dbReference type="PIRSF" id="PIRSF001529">
    <property type="entry name" value="Ser-tRNA-synth_IIa"/>
    <property type="match status" value="1"/>
</dbReference>
<dbReference type="PRINTS" id="PR00981">
    <property type="entry name" value="TRNASYNTHSER"/>
</dbReference>
<dbReference type="SUPFAM" id="SSF55681">
    <property type="entry name" value="Class II aaRS and biotin synthetases"/>
    <property type="match status" value="1"/>
</dbReference>
<dbReference type="SUPFAM" id="SSF46589">
    <property type="entry name" value="tRNA-binding arm"/>
    <property type="match status" value="1"/>
</dbReference>
<dbReference type="PROSITE" id="PS50862">
    <property type="entry name" value="AA_TRNA_LIGASE_II"/>
    <property type="match status" value="1"/>
</dbReference>
<reference key="1">
    <citation type="journal article" date="2010" name="Proc. Natl. Acad. Sci. U.S.A.">
        <title>Nitrosopumilus maritimus genome reveals unique mechanisms for nitrification and autotrophy in globally distributed marine crenarchaea.</title>
        <authorList>
            <person name="Walker C.B."/>
            <person name="de la Torre J.R."/>
            <person name="Klotz M.G."/>
            <person name="Urakawa H."/>
            <person name="Pinel N."/>
            <person name="Arp D.J."/>
            <person name="Brochier-Armanet C."/>
            <person name="Chain P.S."/>
            <person name="Chan P.P."/>
            <person name="Gollabgir A."/>
            <person name="Hemp J."/>
            <person name="Hugler M."/>
            <person name="Karr E.A."/>
            <person name="Konneke M."/>
            <person name="Shin M."/>
            <person name="Lawton T.J."/>
            <person name="Lowe T."/>
            <person name="Martens-Habbena W."/>
            <person name="Sayavedra-Soto L.A."/>
            <person name="Lang D."/>
            <person name="Sievert S.M."/>
            <person name="Rosenzweig A.C."/>
            <person name="Manning G."/>
            <person name="Stahl D.A."/>
        </authorList>
    </citation>
    <scope>NUCLEOTIDE SEQUENCE [LARGE SCALE GENOMIC DNA]</scope>
    <source>
        <strain>SCM1</strain>
    </source>
</reference>
<protein>
    <recommendedName>
        <fullName evidence="1">Serine--tRNA ligase</fullName>
        <ecNumber evidence="1">6.1.1.11</ecNumber>
    </recommendedName>
    <alternativeName>
        <fullName evidence="1">Seryl-tRNA synthetase</fullName>
        <shortName evidence="1">SerRS</shortName>
    </alternativeName>
    <alternativeName>
        <fullName evidence="1">Seryl-tRNA(Ser/Sec) synthetase</fullName>
    </alternativeName>
</protein>
<accession>A9A4V3</accession>
<feature type="chain" id="PRO_1000098101" description="Serine--tRNA ligase">
    <location>
        <begin position="1"/>
        <end position="421"/>
    </location>
</feature>
<feature type="binding site" evidence="1">
    <location>
        <begin position="229"/>
        <end position="231"/>
    </location>
    <ligand>
        <name>L-serine</name>
        <dbReference type="ChEBI" id="CHEBI:33384"/>
    </ligand>
</feature>
<feature type="binding site" evidence="1">
    <location>
        <begin position="260"/>
        <end position="262"/>
    </location>
    <ligand>
        <name>ATP</name>
        <dbReference type="ChEBI" id="CHEBI:30616"/>
    </ligand>
</feature>
<feature type="binding site" evidence="1">
    <location>
        <position position="276"/>
    </location>
    <ligand>
        <name>ATP</name>
        <dbReference type="ChEBI" id="CHEBI:30616"/>
    </ligand>
</feature>
<feature type="binding site" evidence="1">
    <location>
        <position position="283"/>
    </location>
    <ligand>
        <name>L-serine</name>
        <dbReference type="ChEBI" id="CHEBI:33384"/>
    </ligand>
</feature>
<feature type="binding site" evidence="1">
    <location>
        <begin position="347"/>
        <end position="350"/>
    </location>
    <ligand>
        <name>ATP</name>
        <dbReference type="ChEBI" id="CHEBI:30616"/>
    </ligand>
</feature>
<feature type="binding site" evidence="1">
    <location>
        <position position="383"/>
    </location>
    <ligand>
        <name>L-serine</name>
        <dbReference type="ChEBI" id="CHEBI:33384"/>
    </ligand>
</feature>
<name>SYS_NITMS</name>
<proteinExistence type="inferred from homology"/>
<gene>
    <name evidence="1" type="primary">serS</name>
    <name type="ordered locus">Nmar_1511</name>
</gene>
<keyword id="KW-0030">Aminoacyl-tRNA synthetase</keyword>
<keyword id="KW-0067">ATP-binding</keyword>
<keyword id="KW-0963">Cytoplasm</keyword>
<keyword id="KW-0436">Ligase</keyword>
<keyword id="KW-0547">Nucleotide-binding</keyword>
<keyword id="KW-0648">Protein biosynthesis</keyword>
<keyword id="KW-1185">Reference proteome</keyword>
<sequence>MLDPKLLKEKPQVIRDMLKARAVDFDLDGLIESDQKRREFIIKTDEFKKRRNEIGNEIAQKKKAGEDTSTILDEMKNVSAELAKLESQQEEIESKYAKLAFTVPNLVHESVPVGPDDTANKEMRKWGEIPQFDFKINDHIDMSENLDLVDLERAAKVAGARFYYLKNDLVRLNQSLIHFALDFLAEKEYSLVQPPYMINRSSMEGAVIADDFEEVIYKVEEEDLYMIGTSEHAMAAMHSKEIIEGKDLPIRYAGVSPCFRKEAGAHGRDQKGIFRVHQFDKIEQFVYARPEDSWKEHEKMLAVAEEFYQKLEIPHRVMLLSTGDMGKISAKTYDIEAWMAGQNSYREIVSCSNCLDYQARRLKIRFRDKTNEDTQYIHTLNSTLVATTRVLVSIMENFQTKDGHIKIPQVLQSYMGNQKEI</sequence>